<proteinExistence type="inferred from homology"/>
<reference key="1">
    <citation type="submission" date="2008-02" db="EMBL/GenBank/DDBJ databases">
        <title>Complete sequence of Synechococcus sp. PCC 7002.</title>
        <authorList>
            <person name="Li T."/>
            <person name="Zhao J."/>
            <person name="Zhao C."/>
            <person name="Liu Z."/>
            <person name="Zhao F."/>
            <person name="Marquardt J."/>
            <person name="Nomura C.T."/>
            <person name="Persson S."/>
            <person name="Detter J.C."/>
            <person name="Richardson P.M."/>
            <person name="Lanz C."/>
            <person name="Schuster S.C."/>
            <person name="Wang J."/>
            <person name="Li S."/>
            <person name="Huang X."/>
            <person name="Cai T."/>
            <person name="Yu Z."/>
            <person name="Luo J."/>
            <person name="Zhao J."/>
            <person name="Bryant D.A."/>
        </authorList>
    </citation>
    <scope>NUCLEOTIDE SEQUENCE [LARGE SCALE GENOMIC DNA]</scope>
    <source>
        <strain>ATCC 27264 / PCC 7002 / PR-6</strain>
    </source>
</reference>
<sequence>MPTIQQLIRSERYKLKKKTKSPALKQCPQRRGVCTRVYTTTPKKPNSALRKVARVRLTSGFEVTAYIPGIGHNLQEHSVVLIRGGRVKDLPGVRYHIVRGTLDATGVKDRKQGRSKYGAKRPKE</sequence>
<keyword id="KW-0488">Methylation</keyword>
<keyword id="KW-1185">Reference proteome</keyword>
<keyword id="KW-0687">Ribonucleoprotein</keyword>
<keyword id="KW-0689">Ribosomal protein</keyword>
<keyword id="KW-0694">RNA-binding</keyword>
<keyword id="KW-0699">rRNA-binding</keyword>
<keyword id="KW-0820">tRNA-binding</keyword>
<evidence type="ECO:0000250" key="1"/>
<evidence type="ECO:0000255" key="2">
    <source>
        <dbReference type="HAMAP-Rule" id="MF_00403"/>
    </source>
</evidence>
<evidence type="ECO:0000256" key="3">
    <source>
        <dbReference type="SAM" id="MobiDB-lite"/>
    </source>
</evidence>
<evidence type="ECO:0000305" key="4"/>
<protein>
    <recommendedName>
        <fullName evidence="2">Small ribosomal subunit protein uS12</fullName>
    </recommendedName>
    <alternativeName>
        <fullName evidence="4">30S ribosomal protein S12</fullName>
    </alternativeName>
</protein>
<name>RS12_PICP2</name>
<dbReference type="EMBL" id="CP000951">
    <property type="protein sequence ID" value="ACB00051.1"/>
    <property type="molecule type" value="Genomic_DNA"/>
</dbReference>
<dbReference type="RefSeq" id="WP_012307672.1">
    <property type="nucleotide sequence ID" value="NZ_JAHHPU010000002.1"/>
</dbReference>
<dbReference type="SMR" id="B1XI66"/>
<dbReference type="STRING" id="32049.SYNPCC7002_A2064"/>
<dbReference type="KEGG" id="syp:SYNPCC7002_A2064"/>
<dbReference type="eggNOG" id="COG0048">
    <property type="taxonomic scope" value="Bacteria"/>
</dbReference>
<dbReference type="HOGENOM" id="CLU_104295_1_2_3"/>
<dbReference type="Proteomes" id="UP000001688">
    <property type="component" value="Chromosome"/>
</dbReference>
<dbReference type="GO" id="GO:0015935">
    <property type="term" value="C:small ribosomal subunit"/>
    <property type="evidence" value="ECO:0007669"/>
    <property type="project" value="InterPro"/>
</dbReference>
<dbReference type="GO" id="GO:0019843">
    <property type="term" value="F:rRNA binding"/>
    <property type="evidence" value="ECO:0007669"/>
    <property type="project" value="UniProtKB-UniRule"/>
</dbReference>
<dbReference type="GO" id="GO:0003735">
    <property type="term" value="F:structural constituent of ribosome"/>
    <property type="evidence" value="ECO:0007669"/>
    <property type="project" value="InterPro"/>
</dbReference>
<dbReference type="GO" id="GO:0000049">
    <property type="term" value="F:tRNA binding"/>
    <property type="evidence" value="ECO:0007669"/>
    <property type="project" value="UniProtKB-UniRule"/>
</dbReference>
<dbReference type="GO" id="GO:0006412">
    <property type="term" value="P:translation"/>
    <property type="evidence" value="ECO:0007669"/>
    <property type="project" value="UniProtKB-UniRule"/>
</dbReference>
<dbReference type="CDD" id="cd03368">
    <property type="entry name" value="Ribosomal_S12"/>
    <property type="match status" value="1"/>
</dbReference>
<dbReference type="FunFam" id="2.40.50.140:FF:000001">
    <property type="entry name" value="30S ribosomal protein S12"/>
    <property type="match status" value="1"/>
</dbReference>
<dbReference type="Gene3D" id="2.40.50.140">
    <property type="entry name" value="Nucleic acid-binding proteins"/>
    <property type="match status" value="1"/>
</dbReference>
<dbReference type="HAMAP" id="MF_00403_B">
    <property type="entry name" value="Ribosomal_uS12_B"/>
    <property type="match status" value="1"/>
</dbReference>
<dbReference type="InterPro" id="IPR012340">
    <property type="entry name" value="NA-bd_OB-fold"/>
</dbReference>
<dbReference type="InterPro" id="IPR006032">
    <property type="entry name" value="Ribosomal_uS12"/>
</dbReference>
<dbReference type="InterPro" id="IPR005679">
    <property type="entry name" value="Ribosomal_uS12_bac"/>
</dbReference>
<dbReference type="NCBIfam" id="TIGR00981">
    <property type="entry name" value="rpsL_bact"/>
    <property type="match status" value="1"/>
</dbReference>
<dbReference type="PANTHER" id="PTHR11652">
    <property type="entry name" value="30S RIBOSOMAL PROTEIN S12 FAMILY MEMBER"/>
    <property type="match status" value="1"/>
</dbReference>
<dbReference type="Pfam" id="PF00164">
    <property type="entry name" value="Ribosom_S12_S23"/>
    <property type="match status" value="1"/>
</dbReference>
<dbReference type="PIRSF" id="PIRSF002133">
    <property type="entry name" value="Ribosomal_S12/S23"/>
    <property type="match status" value="1"/>
</dbReference>
<dbReference type="PRINTS" id="PR01034">
    <property type="entry name" value="RIBOSOMALS12"/>
</dbReference>
<dbReference type="SUPFAM" id="SSF50249">
    <property type="entry name" value="Nucleic acid-binding proteins"/>
    <property type="match status" value="1"/>
</dbReference>
<dbReference type="PROSITE" id="PS00055">
    <property type="entry name" value="RIBOSOMAL_S12"/>
    <property type="match status" value="1"/>
</dbReference>
<organism>
    <name type="scientific">Picosynechococcus sp. (strain ATCC 27264 / PCC 7002 / PR-6)</name>
    <name type="common">Agmenellum quadruplicatum</name>
    <dbReference type="NCBI Taxonomy" id="32049"/>
    <lineage>
        <taxon>Bacteria</taxon>
        <taxon>Bacillati</taxon>
        <taxon>Cyanobacteriota</taxon>
        <taxon>Cyanophyceae</taxon>
        <taxon>Oscillatoriophycideae</taxon>
        <taxon>Chroococcales</taxon>
        <taxon>Geminocystaceae</taxon>
        <taxon>Picosynechococcus</taxon>
    </lineage>
</organism>
<comment type="function">
    <text evidence="2">With S4 and S5 plays an important role in translational accuracy.</text>
</comment>
<comment type="function">
    <text evidence="2">Interacts with and stabilizes bases of the 16S rRNA that are involved in tRNA selection in the A site and with the mRNA backbone. Located at the interface of the 30S and 50S subunits, it traverses the body of the 30S subunit contacting proteins on the other side and probably holding the rRNA structure together. The combined cluster of proteins S8, S12 and S17 appears to hold together the shoulder and platform of the 30S subunit.</text>
</comment>
<comment type="subunit">
    <text evidence="2">Part of the 30S ribosomal subunit. Contacts proteins S8 and S17. May interact with IF1 in the 30S initiation complex.</text>
</comment>
<comment type="similarity">
    <text evidence="2">Belongs to the universal ribosomal protein uS12 family.</text>
</comment>
<accession>B1XI66</accession>
<gene>
    <name evidence="2" type="primary">rpsL</name>
    <name evidence="2" type="synonym">rps12</name>
    <name type="ordered locus">SYNPCC7002_A2064</name>
</gene>
<feature type="chain" id="PRO_1000123528" description="Small ribosomal subunit protein uS12">
    <location>
        <begin position="1"/>
        <end position="124"/>
    </location>
</feature>
<feature type="region of interest" description="Disordered" evidence="3">
    <location>
        <begin position="104"/>
        <end position="124"/>
    </location>
</feature>
<feature type="compositionally biased region" description="Basic residues" evidence="3">
    <location>
        <begin position="113"/>
        <end position="124"/>
    </location>
</feature>
<feature type="modified residue" description="3-methylthioaspartic acid" evidence="1">
    <location>
        <position position="89"/>
    </location>
</feature>